<comment type="similarity">
    <text evidence="1">Belongs to the bacterial ribosomal protein bL35 family.</text>
</comment>
<accession>B7IJX2</accession>
<feature type="chain" id="PRO_1000127305" description="Large ribosomal subunit protein bL35">
    <location>
        <begin position="1"/>
        <end position="66"/>
    </location>
</feature>
<feature type="region of interest" description="Disordered" evidence="2">
    <location>
        <begin position="1"/>
        <end position="26"/>
    </location>
</feature>
<sequence length="66" mass="7496">MPKQKTHRGAAKRFKKTGSGKLKRSHAYTSHLFANKSTKAKRKLRKAGVVSAGDFKRIRQMLDNLK</sequence>
<keyword id="KW-0687">Ribonucleoprotein</keyword>
<keyword id="KW-0689">Ribosomal protein</keyword>
<name>RL35_BACC2</name>
<reference key="1">
    <citation type="submission" date="2008-10" db="EMBL/GenBank/DDBJ databases">
        <title>Genome sequence of Bacillus cereus G9842.</title>
        <authorList>
            <person name="Dodson R.J."/>
            <person name="Durkin A.S."/>
            <person name="Rosovitz M.J."/>
            <person name="Rasko D.A."/>
            <person name="Hoffmaster A."/>
            <person name="Ravel J."/>
            <person name="Sutton G."/>
        </authorList>
    </citation>
    <scope>NUCLEOTIDE SEQUENCE [LARGE SCALE GENOMIC DNA]</scope>
    <source>
        <strain>G9842</strain>
    </source>
</reference>
<organism>
    <name type="scientific">Bacillus cereus (strain G9842)</name>
    <dbReference type="NCBI Taxonomy" id="405531"/>
    <lineage>
        <taxon>Bacteria</taxon>
        <taxon>Bacillati</taxon>
        <taxon>Bacillota</taxon>
        <taxon>Bacilli</taxon>
        <taxon>Bacillales</taxon>
        <taxon>Bacillaceae</taxon>
        <taxon>Bacillus</taxon>
        <taxon>Bacillus cereus group</taxon>
    </lineage>
</organism>
<protein>
    <recommendedName>
        <fullName evidence="1">Large ribosomal subunit protein bL35</fullName>
    </recommendedName>
    <alternativeName>
        <fullName evidence="3">50S ribosomal protein L35</fullName>
    </alternativeName>
</protein>
<proteinExistence type="inferred from homology"/>
<dbReference type="EMBL" id="CP001186">
    <property type="protein sequence ID" value="ACK93595.1"/>
    <property type="molecule type" value="Genomic_DNA"/>
</dbReference>
<dbReference type="RefSeq" id="WP_001125945.1">
    <property type="nucleotide sequence ID" value="NC_011772.1"/>
</dbReference>
<dbReference type="SMR" id="B7IJX2"/>
<dbReference type="GeneID" id="93006536"/>
<dbReference type="KEGG" id="bcg:BCG9842_B0555"/>
<dbReference type="HOGENOM" id="CLU_169643_3_0_9"/>
<dbReference type="Proteomes" id="UP000006744">
    <property type="component" value="Chromosome"/>
</dbReference>
<dbReference type="GO" id="GO:0022625">
    <property type="term" value="C:cytosolic large ribosomal subunit"/>
    <property type="evidence" value="ECO:0007669"/>
    <property type="project" value="TreeGrafter"/>
</dbReference>
<dbReference type="GO" id="GO:0003735">
    <property type="term" value="F:structural constituent of ribosome"/>
    <property type="evidence" value="ECO:0007669"/>
    <property type="project" value="InterPro"/>
</dbReference>
<dbReference type="GO" id="GO:0006412">
    <property type="term" value="P:translation"/>
    <property type="evidence" value="ECO:0007669"/>
    <property type="project" value="UniProtKB-UniRule"/>
</dbReference>
<dbReference type="FunFam" id="4.10.410.60:FF:000001">
    <property type="entry name" value="50S ribosomal protein L35"/>
    <property type="match status" value="1"/>
</dbReference>
<dbReference type="Gene3D" id="4.10.410.60">
    <property type="match status" value="1"/>
</dbReference>
<dbReference type="HAMAP" id="MF_00514">
    <property type="entry name" value="Ribosomal_bL35"/>
    <property type="match status" value="1"/>
</dbReference>
<dbReference type="InterPro" id="IPR001706">
    <property type="entry name" value="Ribosomal_bL35"/>
</dbReference>
<dbReference type="InterPro" id="IPR021137">
    <property type="entry name" value="Ribosomal_bL35-like"/>
</dbReference>
<dbReference type="InterPro" id="IPR018265">
    <property type="entry name" value="Ribosomal_bL35_CS"/>
</dbReference>
<dbReference type="InterPro" id="IPR037229">
    <property type="entry name" value="Ribosomal_bL35_sf"/>
</dbReference>
<dbReference type="NCBIfam" id="TIGR00001">
    <property type="entry name" value="rpmI_bact"/>
    <property type="match status" value="1"/>
</dbReference>
<dbReference type="PANTHER" id="PTHR33343">
    <property type="entry name" value="54S RIBOSOMAL PROTEIN BL35M"/>
    <property type="match status" value="1"/>
</dbReference>
<dbReference type="PANTHER" id="PTHR33343:SF1">
    <property type="entry name" value="LARGE RIBOSOMAL SUBUNIT PROTEIN BL35M"/>
    <property type="match status" value="1"/>
</dbReference>
<dbReference type="Pfam" id="PF01632">
    <property type="entry name" value="Ribosomal_L35p"/>
    <property type="match status" value="1"/>
</dbReference>
<dbReference type="PRINTS" id="PR00064">
    <property type="entry name" value="RIBOSOMALL35"/>
</dbReference>
<dbReference type="SUPFAM" id="SSF143034">
    <property type="entry name" value="L35p-like"/>
    <property type="match status" value="1"/>
</dbReference>
<dbReference type="PROSITE" id="PS00936">
    <property type="entry name" value="RIBOSOMAL_L35"/>
    <property type="match status" value="1"/>
</dbReference>
<gene>
    <name evidence="1" type="primary">rpmI</name>
    <name type="ordered locus">BCG9842_B0555</name>
</gene>
<evidence type="ECO:0000255" key="1">
    <source>
        <dbReference type="HAMAP-Rule" id="MF_00514"/>
    </source>
</evidence>
<evidence type="ECO:0000256" key="2">
    <source>
        <dbReference type="SAM" id="MobiDB-lite"/>
    </source>
</evidence>
<evidence type="ECO:0000305" key="3"/>